<proteinExistence type="inferred from homology"/>
<dbReference type="EC" id="4.1.2.25" evidence="2"/>
<dbReference type="EC" id="5.1.99.8" evidence="2"/>
<dbReference type="EMBL" id="BA000018">
    <property type="protein sequence ID" value="BAB41703.1"/>
    <property type="molecule type" value="Genomic_DNA"/>
</dbReference>
<dbReference type="PIR" id="D89818">
    <property type="entry name" value="D89818"/>
</dbReference>
<dbReference type="RefSeq" id="WP_001154302.1">
    <property type="nucleotide sequence ID" value="NC_002745.2"/>
</dbReference>
<dbReference type="BMRB" id="P64146"/>
<dbReference type="SMR" id="P64146"/>
<dbReference type="EnsemblBacteria" id="BAB41703">
    <property type="protein sequence ID" value="BAB41703"/>
    <property type="gene ID" value="BAB41703"/>
</dbReference>
<dbReference type="KEGG" id="sau:SA0473"/>
<dbReference type="HOGENOM" id="CLU_112632_1_3_9"/>
<dbReference type="UniPathway" id="UPA00077">
    <property type="reaction ID" value="UER00154"/>
</dbReference>
<dbReference type="GO" id="GO:0005737">
    <property type="term" value="C:cytoplasm"/>
    <property type="evidence" value="ECO:0007669"/>
    <property type="project" value="TreeGrafter"/>
</dbReference>
<dbReference type="GO" id="GO:0004150">
    <property type="term" value="F:dihydroneopterin aldolase activity"/>
    <property type="evidence" value="ECO:0007669"/>
    <property type="project" value="UniProtKB-EC"/>
</dbReference>
<dbReference type="GO" id="GO:0016853">
    <property type="term" value="F:isomerase activity"/>
    <property type="evidence" value="ECO:0007669"/>
    <property type="project" value="UniProtKB-KW"/>
</dbReference>
<dbReference type="GO" id="GO:0046656">
    <property type="term" value="P:folic acid biosynthetic process"/>
    <property type="evidence" value="ECO:0007669"/>
    <property type="project" value="UniProtKB-KW"/>
</dbReference>
<dbReference type="GO" id="GO:0046654">
    <property type="term" value="P:tetrahydrofolate biosynthetic process"/>
    <property type="evidence" value="ECO:0007669"/>
    <property type="project" value="UniProtKB-UniPathway"/>
</dbReference>
<dbReference type="CDD" id="cd00534">
    <property type="entry name" value="DHNA_DHNTPE"/>
    <property type="match status" value="1"/>
</dbReference>
<dbReference type="FunFam" id="3.30.1130.10:FF:000003">
    <property type="entry name" value="7,8-dihydroneopterin aldolase"/>
    <property type="match status" value="1"/>
</dbReference>
<dbReference type="Gene3D" id="3.30.1130.10">
    <property type="match status" value="1"/>
</dbReference>
<dbReference type="InterPro" id="IPR006156">
    <property type="entry name" value="Dihydroneopterin_aldolase"/>
</dbReference>
<dbReference type="InterPro" id="IPR006157">
    <property type="entry name" value="FolB_dom"/>
</dbReference>
<dbReference type="InterPro" id="IPR043133">
    <property type="entry name" value="GTP-CH-I_C/QueF"/>
</dbReference>
<dbReference type="NCBIfam" id="TIGR00525">
    <property type="entry name" value="folB"/>
    <property type="match status" value="1"/>
</dbReference>
<dbReference type="NCBIfam" id="TIGR00526">
    <property type="entry name" value="folB_dom"/>
    <property type="match status" value="1"/>
</dbReference>
<dbReference type="PANTHER" id="PTHR42844">
    <property type="entry name" value="DIHYDRONEOPTERIN ALDOLASE 1-RELATED"/>
    <property type="match status" value="1"/>
</dbReference>
<dbReference type="PANTHER" id="PTHR42844:SF1">
    <property type="entry name" value="DIHYDRONEOPTERIN ALDOLASE 1-RELATED"/>
    <property type="match status" value="1"/>
</dbReference>
<dbReference type="Pfam" id="PF02152">
    <property type="entry name" value="FolB"/>
    <property type="match status" value="1"/>
</dbReference>
<dbReference type="SMART" id="SM00905">
    <property type="entry name" value="FolB"/>
    <property type="match status" value="1"/>
</dbReference>
<dbReference type="SUPFAM" id="SSF55620">
    <property type="entry name" value="Tetrahydrobiopterin biosynthesis enzymes-like"/>
    <property type="match status" value="1"/>
</dbReference>
<name>FOLB_STAAN</name>
<reference key="1">
    <citation type="journal article" date="2001" name="Lancet">
        <title>Whole genome sequencing of meticillin-resistant Staphylococcus aureus.</title>
        <authorList>
            <person name="Kuroda M."/>
            <person name="Ohta T."/>
            <person name="Uchiyama I."/>
            <person name="Baba T."/>
            <person name="Yuzawa H."/>
            <person name="Kobayashi I."/>
            <person name="Cui L."/>
            <person name="Oguchi A."/>
            <person name="Aoki K."/>
            <person name="Nagai Y."/>
            <person name="Lian J.-Q."/>
            <person name="Ito T."/>
            <person name="Kanamori M."/>
            <person name="Matsumaru H."/>
            <person name="Maruyama A."/>
            <person name="Murakami H."/>
            <person name="Hosoyama A."/>
            <person name="Mizutani-Ui Y."/>
            <person name="Takahashi N.K."/>
            <person name="Sawano T."/>
            <person name="Inoue R."/>
            <person name="Kaito C."/>
            <person name="Sekimizu K."/>
            <person name="Hirakawa H."/>
            <person name="Kuhara S."/>
            <person name="Goto S."/>
            <person name="Yabuzaki J."/>
            <person name="Kanehisa M."/>
            <person name="Yamashita A."/>
            <person name="Oshima K."/>
            <person name="Furuya K."/>
            <person name="Yoshino C."/>
            <person name="Shiba T."/>
            <person name="Hattori M."/>
            <person name="Ogasawara N."/>
            <person name="Hayashi H."/>
            <person name="Hiramatsu K."/>
        </authorList>
    </citation>
    <scope>NUCLEOTIDE SEQUENCE [LARGE SCALE GENOMIC DNA]</scope>
    <source>
        <strain>N315</strain>
    </source>
</reference>
<protein>
    <recommendedName>
        <fullName>Dihydroneopterin aldolase</fullName>
        <shortName>DHNA</shortName>
        <ecNumber evidence="2">4.1.2.25</ecNumber>
    </recommendedName>
    <alternativeName>
        <fullName>7,8-dihydroneopterin 2'-epimerase</fullName>
    </alternativeName>
    <alternativeName>
        <fullName>7,8-dihydroneopterin aldolase</fullName>
    </alternativeName>
    <alternativeName>
        <fullName>7,8-dihydroneopterin epimerase</fullName>
        <ecNumber evidence="2">5.1.99.8</ecNumber>
    </alternativeName>
    <alternativeName>
        <fullName>Dihydroneopterin epimerase</fullName>
    </alternativeName>
</protein>
<organism>
    <name type="scientific">Staphylococcus aureus (strain N315)</name>
    <dbReference type="NCBI Taxonomy" id="158879"/>
    <lineage>
        <taxon>Bacteria</taxon>
        <taxon>Bacillati</taxon>
        <taxon>Bacillota</taxon>
        <taxon>Bacilli</taxon>
        <taxon>Bacillales</taxon>
        <taxon>Staphylococcaceae</taxon>
        <taxon>Staphylococcus</taxon>
    </lineage>
</organism>
<comment type="function">
    <text evidence="3">Catalyzes the conversion of 7,8-dihydroneopterin to 6-hydroxymethyl-7,8-dihydropterin. Can also catalyze the epimerization of carbon 2' of dihydroneopterin to dihydromonapterin.</text>
</comment>
<comment type="catalytic activity">
    <reaction evidence="3">
        <text>7,8-dihydroneopterin = 6-hydroxymethyl-7,8-dihydropterin + glycolaldehyde</text>
        <dbReference type="Rhea" id="RHEA:10540"/>
        <dbReference type="ChEBI" id="CHEBI:17001"/>
        <dbReference type="ChEBI" id="CHEBI:17071"/>
        <dbReference type="ChEBI" id="CHEBI:44841"/>
        <dbReference type="EC" id="4.1.2.25"/>
    </reaction>
</comment>
<comment type="catalytic activity">
    <reaction evidence="2">
        <text>7,8-dihydroneopterin = 7,8-dihydromonapterin</text>
        <dbReference type="Rhea" id="RHEA:45328"/>
        <dbReference type="ChEBI" id="CHEBI:17001"/>
        <dbReference type="ChEBI" id="CHEBI:71175"/>
        <dbReference type="EC" id="5.1.99.8"/>
    </reaction>
</comment>
<comment type="pathway">
    <text>Cofactor biosynthesis; tetrahydrofolate biosynthesis; 2-amino-4-hydroxy-6-hydroxymethyl-7,8-dihydropteridine diphosphate from 7,8-dihydroneopterin triphosphate: step 3/4.</text>
</comment>
<comment type="subunit">
    <text evidence="1">Homooctamer. Four molecules assemble into a ring, and two rings come together to give a cylinder with a hole of at least 13 a diameter (By similarity).</text>
</comment>
<comment type="similarity">
    <text evidence="4">Belongs to the DHNA family.</text>
</comment>
<evidence type="ECO:0000250" key="1"/>
<evidence type="ECO:0000250" key="2">
    <source>
        <dbReference type="UniProtKB" id="P0AC16"/>
    </source>
</evidence>
<evidence type="ECO:0000250" key="3">
    <source>
        <dbReference type="UniProtKB" id="P56740"/>
    </source>
</evidence>
<evidence type="ECO:0000305" key="4"/>
<keyword id="KW-0289">Folate biosynthesis</keyword>
<keyword id="KW-0413">Isomerase</keyword>
<keyword id="KW-0456">Lyase</keyword>
<gene>
    <name type="primary">folB</name>
    <name type="ordered locus">SA0473</name>
</gene>
<sequence>MQDTIFLKGMRFYGYHGALSAENEIGQIFKVDVTLKVDLAEAGRTDNVIDTVHYGEVFEEVKSIMEGKAVNLLEHLAERIANRINSQYNRVMETKVRITKENPPIPGHYDGVGIEIVRENK</sequence>
<accession>P64146</accession>
<accession>Q99W88</accession>
<feature type="chain" id="PRO_0000168279" description="Dihydroneopterin aldolase">
    <location>
        <begin position="1"/>
        <end position="121"/>
    </location>
</feature>
<feature type="active site" description="Proton donor/acceptor" evidence="3">
    <location>
        <position position="100"/>
    </location>
</feature>
<feature type="binding site" evidence="3">
    <location>
        <position position="22"/>
    </location>
    <ligand>
        <name>substrate</name>
    </ligand>
</feature>
<feature type="binding site" evidence="3">
    <location>
        <position position="54"/>
    </location>
    <ligand>
        <name>substrate</name>
    </ligand>
</feature>
<feature type="binding site" evidence="3">
    <location>
        <begin position="73"/>
        <end position="74"/>
    </location>
    <ligand>
        <name>substrate</name>
    </ligand>
</feature>